<gene>
    <name type="primary">mccA</name>
    <name type="synonym">yrhA</name>
    <name type="ordered locus">BSU27260</name>
</gene>
<sequence>MTVITDITELIGNTPLLRLKNFDVPEGVAVYAKLEMMNPGGSIKDRLGDMLIRDALDSGKVKPGGVIIEATAGNTGIGLALSARKYGLKAIFCVPEHFSREKQQIMQALGASIIHTPRQDGMQGAIQKAIQLETEIENSYCVLQFKNRVNPSTYYKTLGPEMWEALDGNIHTFVAGAGSGGTFAGTASFLKEKNPAVKTVIVEPVGSILNGGEPHAHKTEGIGMEFIPDYMDKSHFDEIYTVTDENAFRLVKEAAEKEGLLIGSSSGAALYAALEEAKKASAGTNIVTVFPDSSDRYISKQIYEGGI</sequence>
<accession>O05393</accession>
<accession>Q795Y2</accession>
<reference key="1">
    <citation type="journal article" date="1997" name="Microbiology">
        <title>Sequence of the Bacillus subtilis genome region in the vicinity of the lev operon reveals two new extracytoplasmic function RNA polymerase sigma factors SigV and SigZ.</title>
        <authorList>
            <person name="Sorokin A."/>
            <person name="Bolotin A."/>
            <person name="Purnelle B."/>
            <person name="Hilbert H."/>
            <person name="Lauber J."/>
            <person name="Duesterhoeft A."/>
            <person name="Ehrlich S.D."/>
        </authorList>
    </citation>
    <scope>NUCLEOTIDE SEQUENCE [GENOMIC DNA]</scope>
    <source>
        <strain>168</strain>
    </source>
</reference>
<reference key="2">
    <citation type="journal article" date="1997" name="Nature">
        <title>The complete genome sequence of the Gram-positive bacterium Bacillus subtilis.</title>
        <authorList>
            <person name="Kunst F."/>
            <person name="Ogasawara N."/>
            <person name="Moszer I."/>
            <person name="Albertini A.M."/>
            <person name="Alloni G."/>
            <person name="Azevedo V."/>
            <person name="Bertero M.G."/>
            <person name="Bessieres P."/>
            <person name="Bolotin A."/>
            <person name="Borchert S."/>
            <person name="Borriss R."/>
            <person name="Boursier L."/>
            <person name="Brans A."/>
            <person name="Braun M."/>
            <person name="Brignell S.C."/>
            <person name="Bron S."/>
            <person name="Brouillet S."/>
            <person name="Bruschi C.V."/>
            <person name="Caldwell B."/>
            <person name="Capuano V."/>
            <person name="Carter N.M."/>
            <person name="Choi S.-K."/>
            <person name="Codani J.-J."/>
            <person name="Connerton I.F."/>
            <person name="Cummings N.J."/>
            <person name="Daniel R.A."/>
            <person name="Denizot F."/>
            <person name="Devine K.M."/>
            <person name="Duesterhoeft A."/>
            <person name="Ehrlich S.D."/>
            <person name="Emmerson P.T."/>
            <person name="Entian K.-D."/>
            <person name="Errington J."/>
            <person name="Fabret C."/>
            <person name="Ferrari E."/>
            <person name="Foulger D."/>
            <person name="Fritz C."/>
            <person name="Fujita M."/>
            <person name="Fujita Y."/>
            <person name="Fuma S."/>
            <person name="Galizzi A."/>
            <person name="Galleron N."/>
            <person name="Ghim S.-Y."/>
            <person name="Glaser P."/>
            <person name="Goffeau A."/>
            <person name="Golightly E.J."/>
            <person name="Grandi G."/>
            <person name="Guiseppi G."/>
            <person name="Guy B.J."/>
            <person name="Haga K."/>
            <person name="Haiech J."/>
            <person name="Harwood C.R."/>
            <person name="Henaut A."/>
            <person name="Hilbert H."/>
            <person name="Holsappel S."/>
            <person name="Hosono S."/>
            <person name="Hullo M.-F."/>
            <person name="Itaya M."/>
            <person name="Jones L.-M."/>
            <person name="Joris B."/>
            <person name="Karamata D."/>
            <person name="Kasahara Y."/>
            <person name="Klaerr-Blanchard M."/>
            <person name="Klein C."/>
            <person name="Kobayashi Y."/>
            <person name="Koetter P."/>
            <person name="Koningstein G."/>
            <person name="Krogh S."/>
            <person name="Kumano M."/>
            <person name="Kurita K."/>
            <person name="Lapidus A."/>
            <person name="Lardinois S."/>
            <person name="Lauber J."/>
            <person name="Lazarevic V."/>
            <person name="Lee S.-M."/>
            <person name="Levine A."/>
            <person name="Liu H."/>
            <person name="Masuda S."/>
            <person name="Mauel C."/>
            <person name="Medigue C."/>
            <person name="Medina N."/>
            <person name="Mellado R.P."/>
            <person name="Mizuno M."/>
            <person name="Moestl D."/>
            <person name="Nakai S."/>
            <person name="Noback M."/>
            <person name="Noone D."/>
            <person name="O'Reilly M."/>
            <person name="Ogawa K."/>
            <person name="Ogiwara A."/>
            <person name="Oudega B."/>
            <person name="Park S.-H."/>
            <person name="Parro V."/>
            <person name="Pohl T.M."/>
            <person name="Portetelle D."/>
            <person name="Porwollik S."/>
            <person name="Prescott A.M."/>
            <person name="Presecan E."/>
            <person name="Pujic P."/>
            <person name="Purnelle B."/>
            <person name="Rapoport G."/>
            <person name="Rey M."/>
            <person name="Reynolds S."/>
            <person name="Rieger M."/>
            <person name="Rivolta C."/>
            <person name="Rocha E."/>
            <person name="Roche B."/>
            <person name="Rose M."/>
            <person name="Sadaie Y."/>
            <person name="Sato T."/>
            <person name="Scanlan E."/>
            <person name="Schleich S."/>
            <person name="Schroeter R."/>
            <person name="Scoffone F."/>
            <person name="Sekiguchi J."/>
            <person name="Sekowska A."/>
            <person name="Seror S.J."/>
            <person name="Serror P."/>
            <person name="Shin B.-S."/>
            <person name="Soldo B."/>
            <person name="Sorokin A."/>
            <person name="Tacconi E."/>
            <person name="Takagi T."/>
            <person name="Takahashi H."/>
            <person name="Takemaru K."/>
            <person name="Takeuchi M."/>
            <person name="Tamakoshi A."/>
            <person name="Tanaka T."/>
            <person name="Terpstra P."/>
            <person name="Tognoni A."/>
            <person name="Tosato V."/>
            <person name="Uchiyama S."/>
            <person name="Vandenbol M."/>
            <person name="Vannier F."/>
            <person name="Vassarotti A."/>
            <person name="Viari A."/>
            <person name="Wambutt R."/>
            <person name="Wedler E."/>
            <person name="Wedler H."/>
            <person name="Weitzenegger T."/>
            <person name="Winters P."/>
            <person name="Wipat A."/>
            <person name="Yamamoto H."/>
            <person name="Yamane K."/>
            <person name="Yasumoto K."/>
            <person name="Yata K."/>
            <person name="Yoshida K."/>
            <person name="Yoshikawa H.-F."/>
            <person name="Zumstein E."/>
            <person name="Yoshikawa H."/>
            <person name="Danchin A."/>
        </authorList>
    </citation>
    <scope>NUCLEOTIDE SEQUENCE [LARGE SCALE GENOMIC DNA]</scope>
    <source>
        <strain>168</strain>
    </source>
</reference>
<reference key="3">
    <citation type="journal article" date="2007" name="J. Bacteriol.">
        <title>Conversion of methionine to cysteine in Bacillus subtilis and its regulation.</title>
        <authorList>
            <person name="Hullo M.-F."/>
            <person name="Auger S."/>
            <person name="Soutourina O."/>
            <person name="Barzu O."/>
            <person name="Yvon M."/>
            <person name="Danchin A."/>
            <person name="Martin-Verstraete I."/>
        </authorList>
    </citation>
    <scope>FUNCTION</scope>
    <scope>CATALYTIC ACTIVITY</scope>
    <scope>INDUCTION</scope>
    <scope>DISRUPTION PHENOTYPE</scope>
    <source>
        <strain>168</strain>
    </source>
</reference>
<comment type="function">
    <text evidence="2">Catalyzes the conversion of O-acetylserine and homocysteine to cystathionine.</text>
</comment>
<comment type="catalytic activity">
    <reaction evidence="2">
        <text>O-acetyl-L-serine + L-homocysteine = L,L-cystathionine + acetate + H(+)</text>
        <dbReference type="Rhea" id="RHEA:32743"/>
        <dbReference type="ChEBI" id="CHEBI:15378"/>
        <dbReference type="ChEBI" id="CHEBI:30089"/>
        <dbReference type="ChEBI" id="CHEBI:58161"/>
        <dbReference type="ChEBI" id="CHEBI:58199"/>
        <dbReference type="ChEBI" id="CHEBI:58340"/>
        <dbReference type="EC" id="2.5.1.134"/>
    </reaction>
</comment>
<comment type="cofactor">
    <cofactor evidence="1">
        <name>pyridoxal 5'-phosphate</name>
        <dbReference type="ChEBI" id="CHEBI:597326"/>
    </cofactor>
</comment>
<comment type="induction">
    <text evidence="2">By methionine. Repressed by sulfate and cysteine.</text>
</comment>
<comment type="disruption phenotype">
    <text evidence="2">Grows very slowly with methionine as sole sulfur source.</text>
</comment>
<comment type="similarity">
    <text evidence="3">Belongs to the cysteine synthase/cystathionine beta-synthase family.</text>
</comment>
<keyword id="KW-0028">Amino-acid biosynthesis</keyword>
<keyword id="KW-0198">Cysteine biosynthesis</keyword>
<keyword id="KW-0663">Pyridoxal phosphate</keyword>
<keyword id="KW-1185">Reference proteome</keyword>
<keyword id="KW-0808">Transferase</keyword>
<dbReference type="EC" id="2.5.1.134" evidence="2"/>
<dbReference type="EMBL" id="U93874">
    <property type="protein sequence ID" value="AAB80858.1"/>
    <property type="molecule type" value="Genomic_DNA"/>
</dbReference>
<dbReference type="EMBL" id="AL009126">
    <property type="protein sequence ID" value="CAB14668.1"/>
    <property type="molecule type" value="Genomic_DNA"/>
</dbReference>
<dbReference type="PIR" id="H69973">
    <property type="entry name" value="H69973"/>
</dbReference>
<dbReference type="RefSeq" id="NP_390604.1">
    <property type="nucleotide sequence ID" value="NC_000964.3"/>
</dbReference>
<dbReference type="RefSeq" id="WP_003229809.1">
    <property type="nucleotide sequence ID" value="NZ_OZ025638.1"/>
</dbReference>
<dbReference type="SMR" id="O05393"/>
<dbReference type="FunCoup" id="O05393">
    <property type="interactions" value="347"/>
</dbReference>
<dbReference type="STRING" id="224308.BSU27260"/>
<dbReference type="PaxDb" id="224308-BSU27260"/>
<dbReference type="EnsemblBacteria" id="CAB14668">
    <property type="protein sequence ID" value="CAB14668"/>
    <property type="gene ID" value="BSU_27260"/>
</dbReference>
<dbReference type="GeneID" id="937576"/>
<dbReference type="KEGG" id="bsu:BSU27260"/>
<dbReference type="PATRIC" id="fig|224308.179.peg.2962"/>
<dbReference type="eggNOG" id="COG0031">
    <property type="taxonomic scope" value="Bacteria"/>
</dbReference>
<dbReference type="InParanoid" id="O05393"/>
<dbReference type="OrthoDB" id="9808024at2"/>
<dbReference type="PhylomeDB" id="O05393"/>
<dbReference type="BioCyc" id="BSUB:BSU27260-MONOMER"/>
<dbReference type="SABIO-RK" id="O05393"/>
<dbReference type="Proteomes" id="UP000001570">
    <property type="component" value="Chromosome"/>
</dbReference>
<dbReference type="GO" id="GO:0005737">
    <property type="term" value="C:cytoplasm"/>
    <property type="evidence" value="ECO:0000318"/>
    <property type="project" value="GO_Central"/>
</dbReference>
<dbReference type="GO" id="GO:0004122">
    <property type="term" value="F:cystathionine beta-synthase activity"/>
    <property type="evidence" value="ECO:0000314"/>
    <property type="project" value="CAFA"/>
</dbReference>
<dbReference type="GO" id="GO:0004124">
    <property type="term" value="F:cysteine synthase activity"/>
    <property type="evidence" value="ECO:0000314"/>
    <property type="project" value="CAFA"/>
</dbReference>
<dbReference type="GO" id="GO:0019344">
    <property type="term" value="P:cysteine biosynthetic process"/>
    <property type="evidence" value="ECO:0000318"/>
    <property type="project" value="GO_Central"/>
</dbReference>
<dbReference type="GO" id="GO:0006535">
    <property type="term" value="P:cysteine biosynthetic process from serine"/>
    <property type="evidence" value="ECO:0000314"/>
    <property type="project" value="CAFA"/>
</dbReference>
<dbReference type="GO" id="GO:0008284">
    <property type="term" value="P:positive regulation of cell population proliferation"/>
    <property type="evidence" value="ECO:0000315"/>
    <property type="project" value="CAFA"/>
</dbReference>
<dbReference type="CDD" id="cd01561">
    <property type="entry name" value="CBS_like"/>
    <property type="match status" value="1"/>
</dbReference>
<dbReference type="FunFam" id="3.40.50.1100:FF:000016">
    <property type="entry name" value="Cysteine synthase A"/>
    <property type="match status" value="1"/>
</dbReference>
<dbReference type="FunFam" id="3.40.50.1100:FF:000118">
    <property type="entry name" value="Related to CYS4-cystathionine beta-synthase"/>
    <property type="match status" value="1"/>
</dbReference>
<dbReference type="Gene3D" id="3.40.50.1100">
    <property type="match status" value="2"/>
</dbReference>
<dbReference type="InterPro" id="IPR050214">
    <property type="entry name" value="Cys_Synth/Cystath_Beta-Synth"/>
</dbReference>
<dbReference type="InterPro" id="IPR001216">
    <property type="entry name" value="P-phosphate_BS"/>
</dbReference>
<dbReference type="InterPro" id="IPR001926">
    <property type="entry name" value="TrpB-like_PALP"/>
</dbReference>
<dbReference type="InterPro" id="IPR036052">
    <property type="entry name" value="TrpB-like_PALP_sf"/>
</dbReference>
<dbReference type="PANTHER" id="PTHR10314">
    <property type="entry name" value="CYSTATHIONINE BETA-SYNTHASE"/>
    <property type="match status" value="1"/>
</dbReference>
<dbReference type="Pfam" id="PF00291">
    <property type="entry name" value="PALP"/>
    <property type="match status" value="1"/>
</dbReference>
<dbReference type="SUPFAM" id="SSF53686">
    <property type="entry name" value="Tryptophan synthase beta subunit-like PLP-dependent enzymes"/>
    <property type="match status" value="1"/>
</dbReference>
<dbReference type="PROSITE" id="PS00901">
    <property type="entry name" value="CYS_SYNTHASE"/>
    <property type="match status" value="1"/>
</dbReference>
<proteinExistence type="evidence at protein level"/>
<name>MCCA_BACSU</name>
<evidence type="ECO:0000250" key="1"/>
<evidence type="ECO:0000269" key="2">
    <source>
    </source>
</evidence>
<evidence type="ECO:0000305" key="3"/>
<feature type="chain" id="PRO_0000360653" description="O-acetylserine dependent cystathionine beta-synthase">
    <location>
        <begin position="1"/>
        <end position="307"/>
    </location>
</feature>
<feature type="binding site" evidence="1">
    <location>
        <position position="74"/>
    </location>
    <ligand>
        <name>pyridoxal 5'-phosphate</name>
        <dbReference type="ChEBI" id="CHEBI:597326"/>
    </ligand>
</feature>
<feature type="binding site" evidence="1">
    <location>
        <begin position="178"/>
        <end position="182"/>
    </location>
    <ligand>
        <name>pyridoxal 5'-phosphate</name>
        <dbReference type="ChEBI" id="CHEBI:597326"/>
    </ligand>
</feature>
<feature type="binding site" evidence="1">
    <location>
        <position position="265"/>
    </location>
    <ligand>
        <name>pyridoxal 5'-phosphate</name>
        <dbReference type="ChEBI" id="CHEBI:597326"/>
    </ligand>
</feature>
<feature type="modified residue" description="N6-(pyridoxal phosphate)lysine" evidence="1">
    <location>
        <position position="44"/>
    </location>
</feature>
<protein>
    <recommendedName>
        <fullName>O-acetylserine dependent cystathionine beta-synthase</fullName>
        <ecNumber evidence="2">2.5.1.134</ecNumber>
    </recommendedName>
</protein>
<organism>
    <name type="scientific">Bacillus subtilis (strain 168)</name>
    <dbReference type="NCBI Taxonomy" id="224308"/>
    <lineage>
        <taxon>Bacteria</taxon>
        <taxon>Bacillati</taxon>
        <taxon>Bacillota</taxon>
        <taxon>Bacilli</taxon>
        <taxon>Bacillales</taxon>
        <taxon>Bacillaceae</taxon>
        <taxon>Bacillus</taxon>
    </lineage>
</organism>